<accession>Q8TJA8</accession>
<reference key="1">
    <citation type="journal article" date="2002" name="Genome Res.">
        <title>The genome of Methanosarcina acetivorans reveals extensive metabolic and physiological diversity.</title>
        <authorList>
            <person name="Galagan J.E."/>
            <person name="Nusbaum C."/>
            <person name="Roy A."/>
            <person name="Endrizzi M.G."/>
            <person name="Macdonald P."/>
            <person name="FitzHugh W."/>
            <person name="Calvo S."/>
            <person name="Engels R."/>
            <person name="Smirnov S."/>
            <person name="Atnoor D."/>
            <person name="Brown A."/>
            <person name="Allen N."/>
            <person name="Naylor J."/>
            <person name="Stange-Thomann N."/>
            <person name="DeArellano K."/>
            <person name="Johnson R."/>
            <person name="Linton L."/>
            <person name="McEwan P."/>
            <person name="McKernan K."/>
            <person name="Talamas J."/>
            <person name="Tirrell A."/>
            <person name="Ye W."/>
            <person name="Zimmer A."/>
            <person name="Barber R.D."/>
            <person name="Cann I."/>
            <person name="Graham D.E."/>
            <person name="Grahame D.A."/>
            <person name="Guss A.M."/>
            <person name="Hedderich R."/>
            <person name="Ingram-Smith C."/>
            <person name="Kuettner H.C."/>
            <person name="Krzycki J.A."/>
            <person name="Leigh J.A."/>
            <person name="Li W."/>
            <person name="Liu J."/>
            <person name="Mukhopadhyay B."/>
            <person name="Reeve J.N."/>
            <person name="Smith K."/>
            <person name="Springer T.A."/>
            <person name="Umayam L.A."/>
            <person name="White O."/>
            <person name="White R.H."/>
            <person name="de Macario E.C."/>
            <person name="Ferry J.G."/>
            <person name="Jarrell K.F."/>
            <person name="Jing H."/>
            <person name="Macario A.J.L."/>
            <person name="Paulsen I.T."/>
            <person name="Pritchett M."/>
            <person name="Sowers K.R."/>
            <person name="Swanson R.V."/>
            <person name="Zinder S.H."/>
            <person name="Lander E."/>
            <person name="Metcalf W.W."/>
            <person name="Birren B."/>
        </authorList>
    </citation>
    <scope>NUCLEOTIDE SEQUENCE [LARGE SCALE GENOMIC DNA]</scope>
    <source>
        <strain>ATCC 35395 / DSM 2834 / JCM 12185 / C2A</strain>
    </source>
</reference>
<evidence type="ECO:0000250" key="1"/>
<evidence type="ECO:0000255" key="2">
    <source>
        <dbReference type="HAMAP-Rule" id="MF_01129"/>
    </source>
</evidence>
<keyword id="KW-0106">Calcium</keyword>
<keyword id="KW-1003">Cell membrane</keyword>
<keyword id="KW-0375">Hydrogen ion transport</keyword>
<keyword id="KW-0406">Ion transport</keyword>
<keyword id="KW-0460">Magnesium</keyword>
<keyword id="KW-0472">Membrane</keyword>
<keyword id="KW-0479">Metal-binding</keyword>
<keyword id="KW-1185">Reference proteome</keyword>
<keyword id="KW-1278">Translocase</keyword>
<keyword id="KW-0812">Transmembrane</keyword>
<keyword id="KW-1133">Transmembrane helix</keyword>
<keyword id="KW-0813">Transport</keyword>
<name>HPPA2_METAC</name>
<comment type="function">
    <text evidence="2">Proton pump that utilizes the energy of pyrophosphate hydrolysis as the driving force for proton movement across the membrane. Generates a proton motive force.</text>
</comment>
<comment type="catalytic activity">
    <reaction evidence="2">
        <text>diphosphate + H2O + H(+)(in) = 2 phosphate + 2 H(+)(out)</text>
        <dbReference type="Rhea" id="RHEA:13973"/>
        <dbReference type="ChEBI" id="CHEBI:15377"/>
        <dbReference type="ChEBI" id="CHEBI:15378"/>
        <dbReference type="ChEBI" id="CHEBI:33019"/>
        <dbReference type="ChEBI" id="CHEBI:43474"/>
        <dbReference type="EC" id="7.1.3.1"/>
    </reaction>
</comment>
<comment type="cofactor">
    <cofactor evidence="2">
        <name>Mg(2+)</name>
        <dbReference type="ChEBI" id="CHEBI:18420"/>
    </cofactor>
</comment>
<comment type="subunit">
    <text evidence="2">Homodimer.</text>
</comment>
<comment type="subcellular location">
    <subcellularLocation>
        <location evidence="2">Cell membrane</location>
        <topology evidence="2">Multi-pass membrane protein</topology>
    </subcellularLocation>
</comment>
<comment type="similarity">
    <text evidence="2">Belongs to the H(+)-translocating pyrophosphatase (TC 3.A.10) family. K(+)-insensitive subfamily.</text>
</comment>
<dbReference type="EC" id="7.1.3.1" evidence="2"/>
<dbReference type="EMBL" id="AE010299">
    <property type="protein sequence ID" value="AAM07231.1"/>
    <property type="molecule type" value="Genomic_DNA"/>
</dbReference>
<dbReference type="RefSeq" id="WP_011023776.1">
    <property type="nucleotide sequence ID" value="NC_003552.1"/>
</dbReference>
<dbReference type="SMR" id="Q8TJA8"/>
<dbReference type="EnsemblBacteria" id="AAM07231">
    <property type="protein sequence ID" value="AAM07231"/>
    <property type="gene ID" value="MA_3880"/>
</dbReference>
<dbReference type="GeneID" id="1475773"/>
<dbReference type="KEGG" id="mac:MA_3880"/>
<dbReference type="HOGENOM" id="CLU_008743_3_1_2"/>
<dbReference type="InParanoid" id="Q8TJA8"/>
<dbReference type="OrthoDB" id="53167at2157"/>
<dbReference type="PhylomeDB" id="Q8TJA8"/>
<dbReference type="Proteomes" id="UP000002487">
    <property type="component" value="Chromosome"/>
</dbReference>
<dbReference type="GO" id="GO:0005886">
    <property type="term" value="C:plasma membrane"/>
    <property type="evidence" value="ECO:0007669"/>
    <property type="project" value="UniProtKB-SubCell"/>
</dbReference>
<dbReference type="GO" id="GO:0009678">
    <property type="term" value="F:diphosphate hydrolysis-driven proton transmembrane transporter activity"/>
    <property type="evidence" value="ECO:0007669"/>
    <property type="project" value="UniProtKB-UniRule"/>
</dbReference>
<dbReference type="GO" id="GO:0004427">
    <property type="term" value="F:inorganic diphosphate phosphatase activity"/>
    <property type="evidence" value="ECO:0007669"/>
    <property type="project" value="UniProtKB-UniRule"/>
</dbReference>
<dbReference type="GO" id="GO:0000287">
    <property type="term" value="F:magnesium ion binding"/>
    <property type="evidence" value="ECO:0007669"/>
    <property type="project" value="UniProtKB-UniRule"/>
</dbReference>
<dbReference type="HAMAP" id="MF_01129">
    <property type="entry name" value="PPase_energized_pump"/>
    <property type="match status" value="1"/>
</dbReference>
<dbReference type="InterPro" id="IPR004131">
    <property type="entry name" value="PPase-energised_H-pump"/>
</dbReference>
<dbReference type="NCBIfam" id="NF001951">
    <property type="entry name" value="PRK00733.1-2"/>
    <property type="match status" value="1"/>
</dbReference>
<dbReference type="NCBIfam" id="NF001953">
    <property type="entry name" value="PRK00733.2-1"/>
    <property type="match status" value="1"/>
</dbReference>
<dbReference type="NCBIfam" id="NF001959">
    <property type="entry name" value="PRK00733.3-4"/>
    <property type="match status" value="1"/>
</dbReference>
<dbReference type="NCBIfam" id="NF001960">
    <property type="entry name" value="PRK00733.3-5"/>
    <property type="match status" value="1"/>
</dbReference>
<dbReference type="NCBIfam" id="TIGR01104">
    <property type="entry name" value="V_PPase"/>
    <property type="match status" value="1"/>
</dbReference>
<dbReference type="PANTHER" id="PTHR31998">
    <property type="entry name" value="K(+)-INSENSITIVE PYROPHOSPHATE-ENERGIZED PROTON PUMP"/>
    <property type="match status" value="1"/>
</dbReference>
<dbReference type="Pfam" id="PF03030">
    <property type="entry name" value="H_PPase"/>
    <property type="match status" value="1"/>
</dbReference>
<dbReference type="PIRSF" id="PIRSF001265">
    <property type="entry name" value="H+-PPase"/>
    <property type="match status" value="1"/>
</dbReference>
<proteinExistence type="inferred from homology"/>
<feature type="chain" id="PRO_0000217036" description="K(+)-insensitive pyrophosphate-energized proton pump">
    <location>
        <begin position="1"/>
        <end position="671"/>
    </location>
</feature>
<feature type="transmembrane region" description="Helical" evidence="2">
    <location>
        <begin position="3"/>
        <end position="23"/>
    </location>
</feature>
<feature type="transmembrane region" description="Helical" evidence="2">
    <location>
        <begin position="57"/>
        <end position="77"/>
    </location>
</feature>
<feature type="transmembrane region" description="Helical" evidence="2">
    <location>
        <begin position="79"/>
        <end position="99"/>
    </location>
</feature>
<feature type="transmembrane region" description="Helical" evidence="2">
    <location>
        <begin position="128"/>
        <end position="148"/>
    </location>
</feature>
<feature type="transmembrane region" description="Helical" evidence="2">
    <location>
        <begin position="156"/>
        <end position="176"/>
    </location>
</feature>
<feature type="transmembrane region" description="Helical" evidence="2">
    <location>
        <begin position="223"/>
        <end position="243"/>
    </location>
</feature>
<feature type="transmembrane region" description="Helical" evidence="2">
    <location>
        <begin position="249"/>
        <end position="269"/>
    </location>
</feature>
<feature type="transmembrane region" description="Helical" evidence="2">
    <location>
        <begin position="285"/>
        <end position="305"/>
    </location>
</feature>
<feature type="transmembrane region" description="Helical" evidence="2">
    <location>
        <begin position="310"/>
        <end position="330"/>
    </location>
</feature>
<feature type="transmembrane region" description="Helical" evidence="2">
    <location>
        <begin position="366"/>
        <end position="386"/>
    </location>
</feature>
<feature type="transmembrane region" description="Helical" evidence="2">
    <location>
        <begin position="391"/>
        <end position="411"/>
    </location>
</feature>
<feature type="transmembrane region" description="Helical" evidence="2">
    <location>
        <begin position="452"/>
        <end position="472"/>
    </location>
</feature>
<feature type="transmembrane region" description="Helical" evidence="2">
    <location>
        <begin position="490"/>
        <end position="510"/>
    </location>
</feature>
<feature type="transmembrane region" description="Helical" evidence="2">
    <location>
        <begin position="558"/>
        <end position="578"/>
    </location>
</feature>
<feature type="transmembrane region" description="Helical" evidence="2">
    <location>
        <begin position="580"/>
        <end position="600"/>
    </location>
</feature>
<feature type="transmembrane region" description="Helical" evidence="2">
    <location>
        <begin position="646"/>
        <end position="666"/>
    </location>
</feature>
<feature type="binding site" evidence="1">
    <location>
        <position position="178"/>
    </location>
    <ligand>
        <name>substrate</name>
    </ligand>
</feature>
<feature type="binding site" evidence="1">
    <location>
        <position position="181"/>
    </location>
    <ligand>
        <name>Mg(2+)</name>
        <dbReference type="ChEBI" id="CHEBI:18420"/>
        <label>1</label>
    </ligand>
</feature>
<feature type="binding site" evidence="1">
    <location>
        <position position="185"/>
    </location>
    <ligand>
        <name>Mg(2+)</name>
        <dbReference type="ChEBI" id="CHEBI:18420"/>
        <label>1</label>
    </ligand>
</feature>
<feature type="binding site" evidence="1">
    <location>
        <position position="208"/>
    </location>
    <ligand>
        <name>Mg(2+)</name>
        <dbReference type="ChEBI" id="CHEBI:18420"/>
        <label>2</label>
    </ligand>
</feature>
<feature type="binding site" evidence="1">
    <location>
        <position position="211"/>
    </location>
    <ligand>
        <name>Mg(2+)</name>
        <dbReference type="ChEBI" id="CHEBI:18420"/>
        <label>2</label>
    </ligand>
</feature>
<feature type="binding site" evidence="1">
    <location>
        <position position="421"/>
    </location>
    <ligand>
        <name>Mg(2+)</name>
        <dbReference type="ChEBI" id="CHEBI:18420"/>
        <label>2</label>
    </ligand>
</feature>
<feature type="binding site" evidence="1">
    <location>
        <position position="607"/>
    </location>
    <ligand>
        <name>Ca(2+)</name>
        <dbReference type="ChEBI" id="CHEBI:29108"/>
    </ligand>
</feature>
<feature type="binding site" evidence="1">
    <location>
        <position position="633"/>
    </location>
    <ligand>
        <name>Ca(2+)</name>
        <dbReference type="ChEBI" id="CHEBI:29108"/>
    </ligand>
</feature>
<feature type="binding site" evidence="1">
    <location>
        <position position="637"/>
    </location>
    <ligand>
        <name>Ca(2+)</name>
        <dbReference type="ChEBI" id="CHEBI:29108"/>
    </ligand>
</feature>
<feature type="binding site" evidence="1">
    <location>
        <position position="640"/>
    </location>
    <ligand>
        <name>substrate</name>
    </ligand>
</feature>
<feature type="site" description="Important for ion transport" evidence="1">
    <location>
        <position position="170"/>
    </location>
</feature>
<feature type="site" description="Important for ion transport" evidence="1">
    <location>
        <position position="215"/>
    </location>
</feature>
<feature type="site" description="Important for ion transport" evidence="1">
    <location>
        <position position="222"/>
    </location>
</feature>
<feature type="site" description="Important for potassium independence" evidence="1">
    <location>
        <position position="451"/>
    </location>
</feature>
<feature type="site" description="Important for ion transport" evidence="1">
    <location>
        <position position="641"/>
    </location>
</feature>
<feature type="site" description="Important for ion transport" evidence="1">
    <location>
        <position position="652"/>
    </location>
</feature>
<protein>
    <recommendedName>
        <fullName evidence="2">K(+)-insensitive pyrophosphate-energized proton pump</fullName>
        <ecNumber evidence="2">7.1.3.1</ecNumber>
    </recommendedName>
    <alternativeName>
        <fullName evidence="2">Membrane-bound proton-translocating pyrophosphatase</fullName>
    </alternativeName>
    <alternativeName>
        <fullName evidence="2">Pyrophosphate-energized inorganic pyrophosphatase</fullName>
        <shortName evidence="2">H(+)-PPase</shortName>
    </alternativeName>
</protein>
<sequence length="671" mass="69017">MESLIFIAPLAGVISLVFAAFFAKSILKEDAGNKRMKEIAGAIQEGAMAYLNRQYKTIAVVSIILSFLILFLLDDGLKIAIGFLAGAISSAAAGYIGMSVSVRANIRTAHAASSGLEKAMSVAFRGGAVTGLAVVGLALLGTSSFYILYGDVDLVVGFGFGASLISLFARVGGGIFTKAADVGADLVGKVEAGIPEDDPRNAGVIADNVGDNVGDCAGMGADLFETYVVTSLAAMLLGSLIIGTYENAILYPLVLGSVAIFASIISVFFVKIGKEGKIMQALYKGVGGSAIISLIAFYFVTNSLMGDIRLFYATVVGIIITVLMVIITEYYTSTDYRPVKTIAASSETGAATNIISGLSIGFESTLVPTVVIVIGILISYFIVGGAADAGIGLYGIAIAAVAMLSTTGMIVALDSYGPITDNAGGIAQMANLPAQVRKVTDALDAVGNTTKAVTKGYAIGSAALGALALFADYRSKVNLGGQSLNLDDPVVLAGLLLGALLPFVFSAVTMSAVGKAAFEVVNEVRRQFREIPGIMEGTAKPEYGRCVDIVTKAALHEMAMPGFLAVLVPLLVGLILGPKALAGLLIGLIVVGFMLALMMDNGGGAWDNAKKLIEDGNHGGRGSEAHKAAVVGDTVGDPFKDTAGPALNALIKVVNMVAILFSSLIIHSGLF</sequence>
<organism>
    <name type="scientific">Methanosarcina acetivorans (strain ATCC 35395 / DSM 2834 / JCM 12185 / C2A)</name>
    <dbReference type="NCBI Taxonomy" id="188937"/>
    <lineage>
        <taxon>Archaea</taxon>
        <taxon>Methanobacteriati</taxon>
        <taxon>Methanobacteriota</taxon>
        <taxon>Stenosarchaea group</taxon>
        <taxon>Methanomicrobia</taxon>
        <taxon>Methanosarcinales</taxon>
        <taxon>Methanosarcinaceae</taxon>
        <taxon>Methanosarcina</taxon>
    </lineage>
</organism>
<gene>
    <name evidence="2" type="primary">hppA2</name>
    <name type="ordered locus">MA_3880</name>
</gene>